<accession>B5R741</accession>
<gene>
    <name evidence="1" type="primary">galK</name>
    <name type="ordered locus">SG0752</name>
</gene>
<name>GAL1_SALG2</name>
<dbReference type="EC" id="2.7.1.6" evidence="1"/>
<dbReference type="EMBL" id="AM933173">
    <property type="protein sequence ID" value="CAR36648.1"/>
    <property type="molecule type" value="Genomic_DNA"/>
</dbReference>
<dbReference type="RefSeq" id="WP_001049363.1">
    <property type="nucleotide sequence ID" value="NC_011274.1"/>
</dbReference>
<dbReference type="SMR" id="B5R741"/>
<dbReference type="KEGG" id="seg:SG0752"/>
<dbReference type="HOGENOM" id="CLU_017814_2_1_6"/>
<dbReference type="UniPathway" id="UPA00214"/>
<dbReference type="Proteomes" id="UP000008321">
    <property type="component" value="Chromosome"/>
</dbReference>
<dbReference type="GO" id="GO:0005829">
    <property type="term" value="C:cytosol"/>
    <property type="evidence" value="ECO:0007669"/>
    <property type="project" value="TreeGrafter"/>
</dbReference>
<dbReference type="GO" id="GO:0005524">
    <property type="term" value="F:ATP binding"/>
    <property type="evidence" value="ECO:0007669"/>
    <property type="project" value="UniProtKB-UniRule"/>
</dbReference>
<dbReference type="GO" id="GO:0004335">
    <property type="term" value="F:galactokinase activity"/>
    <property type="evidence" value="ECO:0007669"/>
    <property type="project" value="UniProtKB-UniRule"/>
</dbReference>
<dbReference type="GO" id="GO:0000287">
    <property type="term" value="F:magnesium ion binding"/>
    <property type="evidence" value="ECO:0007669"/>
    <property type="project" value="UniProtKB-UniRule"/>
</dbReference>
<dbReference type="GO" id="GO:0006012">
    <property type="term" value="P:galactose metabolic process"/>
    <property type="evidence" value="ECO:0007669"/>
    <property type="project" value="UniProtKB-UniRule"/>
</dbReference>
<dbReference type="FunFam" id="3.30.230.10:FF:000017">
    <property type="entry name" value="Galactokinase"/>
    <property type="match status" value="1"/>
</dbReference>
<dbReference type="FunFam" id="3.30.70.890:FF:000001">
    <property type="entry name" value="Galactokinase"/>
    <property type="match status" value="1"/>
</dbReference>
<dbReference type="Gene3D" id="3.30.230.10">
    <property type="match status" value="1"/>
</dbReference>
<dbReference type="Gene3D" id="3.30.70.890">
    <property type="entry name" value="GHMP kinase, C-terminal domain"/>
    <property type="match status" value="1"/>
</dbReference>
<dbReference type="HAMAP" id="MF_00246">
    <property type="entry name" value="Galactokinase"/>
    <property type="match status" value="1"/>
</dbReference>
<dbReference type="InterPro" id="IPR000705">
    <property type="entry name" value="Galactokinase"/>
</dbReference>
<dbReference type="InterPro" id="IPR022963">
    <property type="entry name" value="Galactokinase_bac"/>
</dbReference>
<dbReference type="InterPro" id="IPR019741">
    <property type="entry name" value="Galactokinase_CS"/>
</dbReference>
<dbReference type="InterPro" id="IPR019539">
    <property type="entry name" value="GalKase_N"/>
</dbReference>
<dbReference type="InterPro" id="IPR013750">
    <property type="entry name" value="GHMP_kinase_C_dom"/>
</dbReference>
<dbReference type="InterPro" id="IPR036554">
    <property type="entry name" value="GHMP_kinase_C_sf"/>
</dbReference>
<dbReference type="InterPro" id="IPR006204">
    <property type="entry name" value="GHMP_kinase_N_dom"/>
</dbReference>
<dbReference type="InterPro" id="IPR006203">
    <property type="entry name" value="GHMP_knse_ATP-bd_CS"/>
</dbReference>
<dbReference type="InterPro" id="IPR006206">
    <property type="entry name" value="Mevalonate/galactokinase"/>
</dbReference>
<dbReference type="InterPro" id="IPR020568">
    <property type="entry name" value="Ribosomal_Su5_D2-typ_SF"/>
</dbReference>
<dbReference type="InterPro" id="IPR014721">
    <property type="entry name" value="Ribsml_uS5_D2-typ_fold_subgr"/>
</dbReference>
<dbReference type="NCBIfam" id="TIGR00131">
    <property type="entry name" value="gal_kin"/>
    <property type="match status" value="1"/>
</dbReference>
<dbReference type="NCBIfam" id="NF003472">
    <property type="entry name" value="PRK05101.1"/>
    <property type="match status" value="1"/>
</dbReference>
<dbReference type="PANTHER" id="PTHR10457:SF7">
    <property type="entry name" value="GALACTOKINASE-RELATED"/>
    <property type="match status" value="1"/>
</dbReference>
<dbReference type="PANTHER" id="PTHR10457">
    <property type="entry name" value="MEVALONATE KINASE/GALACTOKINASE"/>
    <property type="match status" value="1"/>
</dbReference>
<dbReference type="Pfam" id="PF10509">
    <property type="entry name" value="GalKase_gal_bdg"/>
    <property type="match status" value="1"/>
</dbReference>
<dbReference type="Pfam" id="PF08544">
    <property type="entry name" value="GHMP_kinases_C"/>
    <property type="match status" value="1"/>
</dbReference>
<dbReference type="Pfam" id="PF00288">
    <property type="entry name" value="GHMP_kinases_N"/>
    <property type="match status" value="1"/>
</dbReference>
<dbReference type="PIRSF" id="PIRSF000530">
    <property type="entry name" value="Galactokinase"/>
    <property type="match status" value="1"/>
</dbReference>
<dbReference type="PRINTS" id="PR00473">
    <property type="entry name" value="GALCTOKINASE"/>
</dbReference>
<dbReference type="PRINTS" id="PR00959">
    <property type="entry name" value="MEVGALKINASE"/>
</dbReference>
<dbReference type="SUPFAM" id="SSF55060">
    <property type="entry name" value="GHMP Kinase, C-terminal domain"/>
    <property type="match status" value="1"/>
</dbReference>
<dbReference type="SUPFAM" id="SSF54211">
    <property type="entry name" value="Ribosomal protein S5 domain 2-like"/>
    <property type="match status" value="1"/>
</dbReference>
<dbReference type="PROSITE" id="PS00106">
    <property type="entry name" value="GALACTOKINASE"/>
    <property type="match status" value="1"/>
</dbReference>
<dbReference type="PROSITE" id="PS00627">
    <property type="entry name" value="GHMP_KINASES_ATP"/>
    <property type="match status" value="1"/>
</dbReference>
<proteinExistence type="inferred from homology"/>
<comment type="function">
    <text evidence="1">Catalyzes the transfer of the gamma-phosphate of ATP to D-galactose to form alpha-D-galactose-1-phosphate (Gal-1-P).</text>
</comment>
<comment type="catalytic activity">
    <reaction evidence="1">
        <text>alpha-D-galactose + ATP = alpha-D-galactose 1-phosphate + ADP + H(+)</text>
        <dbReference type="Rhea" id="RHEA:13553"/>
        <dbReference type="ChEBI" id="CHEBI:15378"/>
        <dbReference type="ChEBI" id="CHEBI:28061"/>
        <dbReference type="ChEBI" id="CHEBI:30616"/>
        <dbReference type="ChEBI" id="CHEBI:58336"/>
        <dbReference type="ChEBI" id="CHEBI:456216"/>
        <dbReference type="EC" id="2.7.1.6"/>
    </reaction>
</comment>
<comment type="pathway">
    <text evidence="1">Carbohydrate metabolism; galactose metabolism.</text>
</comment>
<comment type="subcellular location">
    <subcellularLocation>
        <location evidence="1">Cytoplasm</location>
    </subcellularLocation>
</comment>
<comment type="similarity">
    <text evidence="1">Belongs to the GHMP kinase family. GalK subfamily.</text>
</comment>
<protein>
    <recommendedName>
        <fullName evidence="1">Galactokinase</fullName>
        <ecNumber evidence="1">2.7.1.6</ecNumber>
    </recommendedName>
    <alternativeName>
        <fullName evidence="1">Galactose kinase</fullName>
    </alternativeName>
</protein>
<sequence length="382" mass="41227">MNLKEKTRALFAEIFGYPATHTIQAPGRVNLIGEHTDYNDGFVLPCAIDYQTVISCAPRDDRTVRVIAADYDNQVDEFSLDAPIVTHDSQQWSNYVRGVVKHLQQRNNAFGGVDMVISGNVPQGAGLSSSASLEVAVGTVFQQLYHLPLDGAQIALNGQEAENQFVGCNCGIMDQLISALGKKDHALLIDCRTLGAKAVSMPKGVAVVIINSNFKRTLVGSEYNTHREQCETGARFFQQPALRDVSLEAFNAVASELDPVVAKRVRHVLSENARTVEAASALEKGDLQRMGQLMAESHASMRDDFEITVPQIDTLVDIVKATIGDQGGVRMTGGGFGGCVVALIPEDLVPAVQQAVAQQYEAKTGIKETFYVCKPSQGAGQC</sequence>
<evidence type="ECO:0000255" key="1">
    <source>
        <dbReference type="HAMAP-Rule" id="MF_00246"/>
    </source>
</evidence>
<feature type="chain" id="PRO_1000100841" description="Galactokinase">
    <location>
        <begin position="1"/>
        <end position="382"/>
    </location>
</feature>
<feature type="active site" description="Proton acceptor" evidence="1">
    <location>
        <position position="174"/>
    </location>
</feature>
<feature type="binding site" evidence="1">
    <location>
        <begin position="34"/>
        <end position="37"/>
    </location>
    <ligand>
        <name>substrate</name>
    </ligand>
</feature>
<feature type="binding site" evidence="1">
    <location>
        <begin position="124"/>
        <end position="130"/>
    </location>
    <ligand>
        <name>ATP</name>
        <dbReference type="ChEBI" id="CHEBI:30616"/>
    </ligand>
</feature>
<feature type="binding site" evidence="1">
    <location>
        <position position="130"/>
    </location>
    <ligand>
        <name>Mg(2+)</name>
        <dbReference type="ChEBI" id="CHEBI:18420"/>
    </ligand>
</feature>
<feature type="binding site" evidence="1">
    <location>
        <position position="162"/>
    </location>
    <ligand>
        <name>Mg(2+)</name>
        <dbReference type="ChEBI" id="CHEBI:18420"/>
    </ligand>
</feature>
<feature type="binding site" evidence="1">
    <location>
        <position position="223"/>
    </location>
    <ligand>
        <name>substrate</name>
    </ligand>
</feature>
<feature type="site" description="Transition state stabilizer" evidence="1">
    <location>
        <position position="28"/>
    </location>
</feature>
<reference key="1">
    <citation type="journal article" date="2008" name="Genome Res.">
        <title>Comparative genome analysis of Salmonella enteritidis PT4 and Salmonella gallinarum 287/91 provides insights into evolutionary and host adaptation pathways.</title>
        <authorList>
            <person name="Thomson N.R."/>
            <person name="Clayton D.J."/>
            <person name="Windhorst D."/>
            <person name="Vernikos G."/>
            <person name="Davidson S."/>
            <person name="Churcher C."/>
            <person name="Quail M.A."/>
            <person name="Stevens M."/>
            <person name="Jones M.A."/>
            <person name="Watson M."/>
            <person name="Barron A."/>
            <person name="Layton A."/>
            <person name="Pickard D."/>
            <person name="Kingsley R.A."/>
            <person name="Bignell A."/>
            <person name="Clark L."/>
            <person name="Harris B."/>
            <person name="Ormond D."/>
            <person name="Abdellah Z."/>
            <person name="Brooks K."/>
            <person name="Cherevach I."/>
            <person name="Chillingworth T."/>
            <person name="Woodward J."/>
            <person name="Norberczak H."/>
            <person name="Lord A."/>
            <person name="Arrowsmith C."/>
            <person name="Jagels K."/>
            <person name="Moule S."/>
            <person name="Mungall K."/>
            <person name="Saunders M."/>
            <person name="Whitehead S."/>
            <person name="Chabalgoity J.A."/>
            <person name="Maskell D."/>
            <person name="Humphreys T."/>
            <person name="Roberts M."/>
            <person name="Barrow P.A."/>
            <person name="Dougan G."/>
            <person name="Parkhill J."/>
        </authorList>
    </citation>
    <scope>NUCLEOTIDE SEQUENCE [LARGE SCALE GENOMIC DNA]</scope>
    <source>
        <strain>287/91 / NCTC 13346</strain>
    </source>
</reference>
<keyword id="KW-0067">ATP-binding</keyword>
<keyword id="KW-0119">Carbohydrate metabolism</keyword>
<keyword id="KW-0963">Cytoplasm</keyword>
<keyword id="KW-0299">Galactose metabolism</keyword>
<keyword id="KW-0418">Kinase</keyword>
<keyword id="KW-0460">Magnesium</keyword>
<keyword id="KW-0479">Metal-binding</keyword>
<keyword id="KW-0547">Nucleotide-binding</keyword>
<keyword id="KW-0808">Transferase</keyword>
<organism>
    <name type="scientific">Salmonella gallinarum (strain 287/91 / NCTC 13346)</name>
    <dbReference type="NCBI Taxonomy" id="550538"/>
    <lineage>
        <taxon>Bacteria</taxon>
        <taxon>Pseudomonadati</taxon>
        <taxon>Pseudomonadota</taxon>
        <taxon>Gammaproteobacteria</taxon>
        <taxon>Enterobacterales</taxon>
        <taxon>Enterobacteriaceae</taxon>
        <taxon>Salmonella</taxon>
    </lineage>
</organism>